<feature type="chain" id="PRO_0000417114" description="CRISPR-associated exonuclease Cas4/endonuclease Cas1 fusion">
    <location>
        <begin position="1"/>
        <end position="559"/>
    </location>
</feature>
<feature type="region of interest" description="CRISPR-associated exonuclease Cas4">
    <location>
        <begin position="1"/>
        <end position="198"/>
    </location>
</feature>
<feature type="region of interest" description="CRISPR-associated endonuclease Cas1">
    <location>
        <begin position="224"/>
        <end position="559"/>
    </location>
</feature>
<feature type="binding site" evidence="3">
    <location>
        <position position="22"/>
    </location>
    <ligand>
        <name>[4Fe-4S] cluster</name>
        <dbReference type="ChEBI" id="CHEBI:49883"/>
    </ligand>
</feature>
<feature type="binding site" evidence="3">
    <location>
        <position position="87"/>
    </location>
    <ligand>
        <name>Mn(2+)</name>
        <dbReference type="ChEBI" id="CHEBI:29035"/>
        <label>1</label>
    </ligand>
</feature>
<feature type="binding site" evidence="3">
    <location>
        <position position="100"/>
    </location>
    <ligand>
        <name>Mn(2+)</name>
        <dbReference type="ChEBI" id="CHEBI:29035"/>
        <label>1</label>
    </ligand>
</feature>
<feature type="binding site" evidence="3">
    <location>
        <position position="187"/>
    </location>
    <ligand>
        <name>[4Fe-4S] cluster</name>
        <dbReference type="ChEBI" id="CHEBI:49883"/>
    </ligand>
</feature>
<feature type="binding site" evidence="3">
    <location>
        <position position="190"/>
    </location>
    <ligand>
        <name>[4Fe-4S] cluster</name>
        <dbReference type="ChEBI" id="CHEBI:49883"/>
    </ligand>
</feature>
<feature type="binding site" evidence="3">
    <location>
        <position position="196"/>
    </location>
    <ligand>
        <name>[4Fe-4S] cluster</name>
        <dbReference type="ChEBI" id="CHEBI:49883"/>
    </ligand>
</feature>
<feature type="binding site" evidence="2">
    <location>
        <position position="380"/>
    </location>
    <ligand>
        <name>Mn(2+)</name>
        <dbReference type="ChEBI" id="CHEBI:29035"/>
        <label>2</label>
    </ligand>
</feature>
<feature type="binding site" evidence="2">
    <location>
        <position position="451"/>
    </location>
    <ligand>
        <name>Mn(2+)</name>
        <dbReference type="ChEBI" id="CHEBI:29035"/>
        <label>2</label>
    </ligand>
</feature>
<feature type="binding site" evidence="2">
    <location>
        <position position="466"/>
    </location>
    <ligand>
        <name>Mn(2+)</name>
        <dbReference type="ChEBI" id="CHEBI:29035"/>
        <label>2</label>
    </ligand>
</feature>
<feature type="helix" evidence="5">
    <location>
        <begin position="13"/>
        <end position="19"/>
    </location>
</feature>
<feature type="helix" evidence="5">
    <location>
        <begin position="23"/>
        <end position="31"/>
    </location>
</feature>
<feature type="helix" evidence="5">
    <location>
        <begin position="39"/>
        <end position="52"/>
    </location>
</feature>
<feature type="strand" evidence="5">
    <location>
        <begin position="64"/>
        <end position="77"/>
    </location>
</feature>
<feature type="turn" evidence="5">
    <location>
        <begin position="78"/>
        <end position="81"/>
    </location>
</feature>
<feature type="strand" evidence="5">
    <location>
        <begin position="82"/>
        <end position="92"/>
    </location>
</feature>
<feature type="strand" evidence="5">
    <location>
        <begin position="98"/>
        <end position="104"/>
    </location>
</feature>
<feature type="helix" evidence="5">
    <location>
        <begin position="115"/>
        <end position="130"/>
    </location>
</feature>
<feature type="strand" evidence="5">
    <location>
        <begin position="138"/>
        <end position="142"/>
    </location>
</feature>
<feature type="turn" evidence="5">
    <location>
        <begin position="143"/>
        <end position="145"/>
    </location>
</feature>
<feature type="strand" evidence="5">
    <location>
        <begin position="149"/>
        <end position="151"/>
    </location>
</feature>
<feature type="helix" evidence="5">
    <location>
        <begin position="155"/>
        <end position="174"/>
    </location>
</feature>
<feature type="helix" evidence="5">
    <location>
        <begin position="187"/>
        <end position="189"/>
    </location>
</feature>
<feature type="helix" evidence="5">
    <location>
        <begin position="193"/>
        <end position="196"/>
    </location>
</feature>
<feature type="helix" evidence="5">
    <location>
        <begin position="198"/>
        <end position="204"/>
    </location>
</feature>
<feature type="strand" evidence="5">
    <location>
        <begin position="222"/>
        <end position="226"/>
    </location>
</feature>
<feature type="strand" evidence="5">
    <location>
        <begin position="231"/>
        <end position="236"/>
    </location>
</feature>
<feature type="strand" evidence="5">
    <location>
        <begin position="239"/>
        <end position="244"/>
    </location>
</feature>
<feature type="strand" evidence="5">
    <location>
        <begin position="247"/>
        <end position="251"/>
    </location>
</feature>
<feature type="helix" evidence="5">
    <location>
        <begin position="254"/>
        <end position="256"/>
    </location>
</feature>
<feature type="strand" evidence="5">
    <location>
        <begin position="257"/>
        <end position="265"/>
    </location>
</feature>
<feature type="helix" evidence="5">
    <location>
        <begin position="270"/>
        <end position="278"/>
    </location>
</feature>
<feature type="strand" evidence="5">
    <location>
        <begin position="283"/>
        <end position="286"/>
    </location>
</feature>
<feature type="strand" evidence="5">
    <location>
        <begin position="292"/>
        <end position="295"/>
    </location>
</feature>
<feature type="helix" evidence="5">
    <location>
        <begin position="305"/>
        <end position="314"/>
    </location>
</feature>
<feature type="helix" evidence="5">
    <location>
        <begin position="317"/>
        <end position="341"/>
    </location>
</feature>
<feature type="strand" evidence="5">
    <location>
        <begin position="346"/>
        <end position="351"/>
    </location>
</feature>
<feature type="helix" evidence="5">
    <location>
        <begin position="354"/>
        <end position="368"/>
    </location>
</feature>
<feature type="helix" evidence="5">
    <location>
        <begin position="373"/>
        <end position="389"/>
    </location>
</feature>
<feature type="helix" evidence="5">
    <location>
        <begin position="391"/>
        <end position="394"/>
    </location>
</feature>
<feature type="helix" evidence="5">
    <location>
        <begin position="407"/>
        <end position="409"/>
    </location>
</feature>
<feature type="strand" evidence="5">
    <location>
        <begin position="411"/>
        <end position="414"/>
    </location>
</feature>
<feature type="helix" evidence="5">
    <location>
        <begin position="418"/>
        <end position="439"/>
    </location>
</feature>
<feature type="turn" evidence="5">
    <location>
        <begin position="440"/>
        <end position="442"/>
    </location>
</feature>
<feature type="strand" evidence="5">
    <location>
        <begin position="449"/>
        <end position="451"/>
    </location>
</feature>
<feature type="helix" evidence="5">
    <location>
        <begin position="461"/>
        <end position="464"/>
    </location>
</feature>
<feature type="turn" evidence="5">
    <location>
        <begin position="465"/>
        <end position="467"/>
    </location>
</feature>
<feature type="helix" evidence="5">
    <location>
        <begin position="468"/>
        <end position="482"/>
    </location>
</feature>
<feature type="helix" evidence="5">
    <location>
        <begin position="488"/>
        <end position="490"/>
    </location>
</feature>
<feature type="strand" evidence="5">
    <location>
        <begin position="491"/>
        <end position="493"/>
    </location>
</feature>
<feature type="strand" evidence="5">
    <location>
        <begin position="498"/>
        <end position="500"/>
    </location>
</feature>
<feature type="helix" evidence="5">
    <location>
        <begin position="502"/>
        <end position="516"/>
    </location>
</feature>
<feature type="strand" evidence="5">
    <location>
        <begin position="519"/>
        <end position="521"/>
    </location>
</feature>
<feature type="turn" evidence="5">
    <location>
        <begin position="523"/>
        <end position="525"/>
    </location>
</feature>
<feature type="strand" evidence="5">
    <location>
        <begin position="528"/>
        <end position="530"/>
    </location>
</feature>
<feature type="helix" evidence="5">
    <location>
        <begin position="531"/>
        <end position="546"/>
    </location>
</feature>
<feature type="strand" evidence="5">
    <location>
        <begin position="549"/>
        <end position="552"/>
    </location>
</feature>
<keyword id="KW-0002">3D-structure</keyword>
<keyword id="KW-0004">4Fe-4S</keyword>
<keyword id="KW-0051">Antiviral defense</keyword>
<keyword id="KW-0238">DNA-binding</keyword>
<keyword id="KW-0255">Endonuclease</keyword>
<keyword id="KW-0269">Exonuclease</keyword>
<keyword id="KW-0378">Hydrolase</keyword>
<keyword id="KW-0408">Iron</keyword>
<keyword id="KW-0411">Iron-sulfur</keyword>
<keyword id="KW-0460">Magnesium</keyword>
<keyword id="KW-0464">Manganese</keyword>
<keyword id="KW-0479">Metal-binding</keyword>
<keyword id="KW-0540">Nuclease</keyword>
<keyword id="KW-1185">Reference proteome</keyword>
<organism>
    <name type="scientific">Geobacter sulfurreducens (strain ATCC 51573 / DSM 12127 / PCA)</name>
    <dbReference type="NCBI Taxonomy" id="243231"/>
    <lineage>
        <taxon>Bacteria</taxon>
        <taxon>Pseudomonadati</taxon>
        <taxon>Thermodesulfobacteriota</taxon>
        <taxon>Desulfuromonadia</taxon>
        <taxon>Geobacterales</taxon>
        <taxon>Geobacteraceae</taxon>
        <taxon>Geobacter</taxon>
    </lineage>
</organism>
<comment type="function">
    <text evidence="1 3">CRISPR (clustered regularly interspaced short palindromic repeat), is an adaptive immune system that provides protection against mobile genetic elements (viruses, transposable elements and conjugative plasmids). CRISPR clusters contain spacers, sequences complementary to antecedent mobile elements, and target invading nucleic acids. CRISPR clusters are transcribed and processed into CRISPR RNA (crRNA) (By similarity). The Cas4 region acts as a ssDNA exonuclease, while the Cas1 region acts as a dsDNA endonuclease. Involved in the integration of spacer DNA into the CRISPR cassette (By similarity).</text>
</comment>
<comment type="catalytic activity">
    <reaction>
        <text>exonucleolytic cleavage in the 5'- to 3'-direction to yield nucleoside 3'-phosphates.</text>
        <dbReference type="EC" id="3.1.12.1"/>
    </reaction>
</comment>
<comment type="cofactor">
    <cofactor evidence="3">
        <name>[4Fe-4S] cluster</name>
        <dbReference type="ChEBI" id="CHEBI:49883"/>
    </cofactor>
    <text evidence="3">Binds 1 [4Fe-4S] cluster per subunit.</text>
</comment>
<comment type="cofactor">
    <cofactor evidence="1">
        <name>Mg(2+)</name>
        <dbReference type="ChEBI" id="CHEBI:18420"/>
    </cofactor>
    <cofactor evidence="1">
        <name>Mn(2+)</name>
        <dbReference type="ChEBI" id="CHEBI:29035"/>
    </cofactor>
</comment>
<comment type="subunit">
    <text evidence="1">Homodimer, forms a heterotetramer with a Cas2 homodimer.</text>
</comment>
<comment type="similarity">
    <text evidence="4">In the N-terminal section; belongs to the CRISPR-associated exonuclease Cas4 family.</text>
</comment>
<comment type="similarity">
    <text evidence="4">In the C-terminal section; belongs to the CRISPR-associated endonuclease Cas1 family.</text>
</comment>
<protein>
    <recommendedName>
        <fullName>CRISPR-associated exonuclease Cas4/endonuclease Cas1 fusion</fullName>
        <ecNumber>3.1.-.-</ecNumber>
        <ecNumber>3.1.12.1</ecNumber>
    </recommendedName>
</protein>
<sequence length="559" mass="62515">MAETDGSIPLIPVRMLNEHVYCPRLAYLMWVQGEFSHNEFTVDGVIRHRRVDAGGGVLPSETQEDSRIHARSVSLSSERLGITAKIDLVEGEGAYVSPVDYKRGKRPHVAGGAYEPERVQLCAQGLLLREHGFASDGGALYFVASRERVPVAFDDELIGRTLAAIDEMGRTALSGTMPPPLEDSPKCPRCSLVGICLPDEVRFLSHLSVEPRPIIPADGRGLPLYVQSPKAYVRKDGDCLVIEEERVRVAEARLGETSQVALFGNATLTTAALHECLRREIPVTWLSYGGWFMGHTVSTGHRNVETRTYQYQRSFDPETCLNLARRWIVAKIANCRTLLRRNWRGEGDEAKAPPGLLMSLQDDMRHAMRAPSLEVLLGIEGASAGRYFQHFSRMLRGGDGEGMGFDFTTRNRRPPKDPVNALLSFAYAMLTREWTVALAAVGLDPYRGFYHQPRFGRPALALDMMEPFRPLIADSTVLMAINNGEIRTGDFVRSAGGCNLTDSARKRFIAGFERRMEQEVTHPIFKYTISYRRLLEVQARLLTRYLSGEIPAYPNFVTR</sequence>
<proteinExistence type="evidence at protein level"/>
<dbReference type="EC" id="3.1.-.-"/>
<dbReference type="EC" id="3.1.12.1"/>
<dbReference type="EMBL" id="AE017180">
    <property type="protein sequence ID" value="AAR33392.1"/>
    <property type="molecule type" value="Genomic_DNA"/>
</dbReference>
<dbReference type="RefSeq" id="NP_951119.1">
    <property type="nucleotide sequence ID" value="NC_002939.5"/>
</dbReference>
<dbReference type="RefSeq" id="WP_010940735.1">
    <property type="nucleotide sequence ID" value="NC_002939.5"/>
</dbReference>
<dbReference type="PDB" id="7MI4">
    <property type="method" value="EM"/>
    <property type="resolution" value="3.20 A"/>
    <property type="chains" value="A/B/C/D=1-559"/>
</dbReference>
<dbReference type="PDB" id="7MI5">
    <property type="method" value="EM"/>
    <property type="resolution" value="3.57 A"/>
    <property type="chains" value="A/B/C/D=1-559"/>
</dbReference>
<dbReference type="PDB" id="7MI9">
    <property type="method" value="EM"/>
    <property type="resolution" value="3.89 A"/>
    <property type="chains" value="A/B/C/D=1-559"/>
</dbReference>
<dbReference type="PDB" id="7MIB">
    <property type="method" value="EM"/>
    <property type="resolution" value="5.80 A"/>
    <property type="chains" value="A/B/C/D=1-559"/>
</dbReference>
<dbReference type="PDB" id="7MID">
    <property type="method" value="EM"/>
    <property type="resolution" value="3.56 A"/>
    <property type="chains" value="A/B=1-559"/>
</dbReference>
<dbReference type="PDBsum" id="7MI4"/>
<dbReference type="PDBsum" id="7MI5"/>
<dbReference type="PDBsum" id="7MI9"/>
<dbReference type="PDBsum" id="7MIB"/>
<dbReference type="PDBsum" id="7MID"/>
<dbReference type="EMDB" id="EMD-23839"/>
<dbReference type="EMDB" id="EMD-23840"/>
<dbReference type="EMDB" id="EMD-23843"/>
<dbReference type="EMDB" id="EMD-23845"/>
<dbReference type="EMDB" id="EMD-23847"/>
<dbReference type="EMDB" id="EMD-23849"/>
<dbReference type="SMR" id="Q74H36"/>
<dbReference type="STRING" id="243231.GSU0057"/>
<dbReference type="EnsemblBacteria" id="AAR33392">
    <property type="protein sequence ID" value="AAR33392"/>
    <property type="gene ID" value="GSU0057"/>
</dbReference>
<dbReference type="KEGG" id="gsu:GSU0057"/>
<dbReference type="PATRIC" id="fig|243231.5.peg.57"/>
<dbReference type="eggNOG" id="COG1468">
    <property type="taxonomic scope" value="Bacteria"/>
</dbReference>
<dbReference type="eggNOG" id="COG1518">
    <property type="taxonomic scope" value="Bacteria"/>
</dbReference>
<dbReference type="HOGENOM" id="CLU_466793_0_0_7"/>
<dbReference type="InParanoid" id="Q74H36"/>
<dbReference type="OrthoDB" id="9803119at2"/>
<dbReference type="Proteomes" id="UP000000577">
    <property type="component" value="Chromosome"/>
</dbReference>
<dbReference type="GO" id="GO:0051539">
    <property type="term" value="F:4 iron, 4 sulfur cluster binding"/>
    <property type="evidence" value="ECO:0007669"/>
    <property type="project" value="UniProtKB-KW"/>
</dbReference>
<dbReference type="GO" id="GO:0003677">
    <property type="term" value="F:DNA binding"/>
    <property type="evidence" value="ECO:0007669"/>
    <property type="project" value="UniProtKB-KW"/>
</dbReference>
<dbReference type="GO" id="GO:0004519">
    <property type="term" value="F:endonuclease activity"/>
    <property type="evidence" value="ECO:0000318"/>
    <property type="project" value="GO_Central"/>
</dbReference>
<dbReference type="GO" id="GO:0004527">
    <property type="term" value="F:exonuclease activity"/>
    <property type="evidence" value="ECO:0007669"/>
    <property type="project" value="UniProtKB-KW"/>
</dbReference>
<dbReference type="GO" id="GO:0046872">
    <property type="term" value="F:metal ion binding"/>
    <property type="evidence" value="ECO:0007669"/>
    <property type="project" value="UniProtKB-UniRule"/>
</dbReference>
<dbReference type="GO" id="GO:0099048">
    <property type="term" value="P:CRISPR-cas system"/>
    <property type="evidence" value="ECO:0000318"/>
    <property type="project" value="GO_Central"/>
</dbReference>
<dbReference type="GO" id="GO:0051607">
    <property type="term" value="P:defense response to virus"/>
    <property type="evidence" value="ECO:0007669"/>
    <property type="project" value="UniProtKB-UniRule"/>
</dbReference>
<dbReference type="GO" id="GO:0043571">
    <property type="term" value="P:maintenance of CRISPR repeat elements"/>
    <property type="evidence" value="ECO:0000318"/>
    <property type="project" value="GO_Central"/>
</dbReference>
<dbReference type="CDD" id="cd09634">
    <property type="entry name" value="Cas1_I-II-III"/>
    <property type="match status" value="1"/>
</dbReference>
<dbReference type="Gene3D" id="3.90.320.10">
    <property type="match status" value="1"/>
</dbReference>
<dbReference type="Gene3D" id="1.20.120.920">
    <property type="entry name" value="CRISPR-associated endonuclease Cas1, C-terminal domain"/>
    <property type="match status" value="1"/>
</dbReference>
<dbReference type="Gene3D" id="3.100.10.20">
    <property type="entry name" value="CRISPR-associated endonuclease Cas1, N-terminal domain"/>
    <property type="match status" value="1"/>
</dbReference>
<dbReference type="HAMAP" id="MF_01470">
    <property type="entry name" value="Cas1"/>
    <property type="match status" value="1"/>
</dbReference>
<dbReference type="InterPro" id="IPR050646">
    <property type="entry name" value="Cas1"/>
</dbReference>
<dbReference type="InterPro" id="IPR002729">
    <property type="entry name" value="CRISPR-assoc_Cas1"/>
</dbReference>
<dbReference type="InterPro" id="IPR042206">
    <property type="entry name" value="CRISPR-assoc_Cas1_C"/>
</dbReference>
<dbReference type="InterPro" id="IPR042211">
    <property type="entry name" value="CRISPR-assoc_Cas1_N"/>
</dbReference>
<dbReference type="InterPro" id="IPR013343">
    <property type="entry name" value="CRISPR-assoc_prot_Cas4"/>
</dbReference>
<dbReference type="InterPro" id="IPR022765">
    <property type="entry name" value="Dna2/Cas4_DUF83"/>
</dbReference>
<dbReference type="InterPro" id="IPR011604">
    <property type="entry name" value="PDDEXK-like_dom_sf"/>
</dbReference>
<dbReference type="NCBIfam" id="TIGR00287">
    <property type="entry name" value="cas1"/>
    <property type="match status" value="1"/>
</dbReference>
<dbReference type="NCBIfam" id="TIGR00372">
    <property type="entry name" value="cas4"/>
    <property type="match status" value="1"/>
</dbReference>
<dbReference type="PANTHER" id="PTHR34353">
    <property type="entry name" value="CRISPR-ASSOCIATED ENDONUCLEASE CAS1 1"/>
    <property type="match status" value="1"/>
</dbReference>
<dbReference type="PANTHER" id="PTHR34353:SF2">
    <property type="entry name" value="CRISPR-ASSOCIATED ENDONUCLEASE CAS1 1"/>
    <property type="match status" value="1"/>
</dbReference>
<dbReference type="Pfam" id="PF01867">
    <property type="entry name" value="Cas_Cas1"/>
    <property type="match status" value="1"/>
</dbReference>
<dbReference type="Pfam" id="PF01930">
    <property type="entry name" value="Cas_Cas4"/>
    <property type="match status" value="1"/>
</dbReference>
<accession>Q74H36</accession>
<name>CS4F1_GEOSL</name>
<reference key="1">
    <citation type="journal article" date="2003" name="Science">
        <title>Genome of Geobacter sulfurreducens: metal reduction in subsurface environments.</title>
        <authorList>
            <person name="Methe B.A."/>
            <person name="Nelson K.E."/>
            <person name="Eisen J.A."/>
            <person name="Paulsen I.T."/>
            <person name="Nelson W.C."/>
            <person name="Heidelberg J.F."/>
            <person name="Wu D."/>
            <person name="Wu M."/>
            <person name="Ward N.L."/>
            <person name="Beanan M.J."/>
            <person name="Dodson R.J."/>
            <person name="Madupu R."/>
            <person name="Brinkac L.M."/>
            <person name="Daugherty S.C."/>
            <person name="DeBoy R.T."/>
            <person name="Durkin A.S."/>
            <person name="Gwinn M.L."/>
            <person name="Kolonay J.F."/>
            <person name="Sullivan S.A."/>
            <person name="Haft D.H."/>
            <person name="Selengut J."/>
            <person name="Davidsen T.M."/>
            <person name="Zafar N."/>
            <person name="White O."/>
            <person name="Tran B."/>
            <person name="Romero C."/>
            <person name="Forberger H.A."/>
            <person name="Weidman J.F."/>
            <person name="Khouri H.M."/>
            <person name="Feldblyum T.V."/>
            <person name="Utterback T.R."/>
            <person name="Van Aken S.E."/>
            <person name="Lovley D.R."/>
            <person name="Fraser C.M."/>
        </authorList>
    </citation>
    <scope>NUCLEOTIDE SEQUENCE [LARGE SCALE GENOMIC DNA]</scope>
    <source>
        <strain>ATCC 51573 / DSM 12127 / PCA</strain>
    </source>
</reference>
<gene>
    <name type="primary">cas4-cas1</name>
    <name type="ordered locus">GSU0057</name>
</gene>
<evidence type="ECO:0000250" key="1"/>
<evidence type="ECO:0000250" key="2">
    <source>
        <dbReference type="UniProtKB" id="Q02ML7"/>
    </source>
</evidence>
<evidence type="ECO:0000250" key="3">
    <source>
        <dbReference type="UniProtKB" id="Q97TX9"/>
    </source>
</evidence>
<evidence type="ECO:0000305" key="4"/>
<evidence type="ECO:0007829" key="5">
    <source>
        <dbReference type="PDB" id="7MI4"/>
    </source>
</evidence>